<name>ELI1_PHYVE</name>
<evidence type="ECO:0000250" key="1"/>
<evidence type="ECO:0000269" key="2">
    <source>
    </source>
</evidence>
<evidence type="ECO:0000305" key="3"/>
<organism>
    <name type="scientific">Phytopythium vexans</name>
    <name type="common">Damping-off fungus</name>
    <name type="synonym">Pythium vexans</name>
    <dbReference type="NCBI Taxonomy" id="907947"/>
    <lineage>
        <taxon>Eukaryota</taxon>
        <taxon>Sar</taxon>
        <taxon>Stramenopiles</taxon>
        <taxon>Oomycota</taxon>
        <taxon>Pythiales</taxon>
        <taxon>Pythiaceae</taxon>
        <taxon>Phytopythium</taxon>
    </lineage>
</organism>
<protein>
    <recommendedName>
        <fullName>Elicitin Vex1</fullName>
    </recommendedName>
</protein>
<accession>P0C231</accession>
<comment type="function">
    <text evidence="1">Induces local and distal defense responses (incompatible hypersensitive reaction) in plants from the solanaceae and cruciferae families. Elicits leaf necrosis and causes the accumulation of pathogenesis-related proteins. Might interact with the lipidic molecules of the plasma membrane (By similarity).</text>
</comment>
<comment type="subcellular location">
    <subcellularLocation>
        <location>Secreted</location>
    </subcellularLocation>
</comment>
<comment type="similarity">
    <text evidence="3">Belongs to the elicitin family.</text>
</comment>
<dbReference type="SMR" id="P0C231"/>
<dbReference type="iPTMnet" id="P0C231"/>
<dbReference type="VEuPathDB" id="FungiDB:PVE_G002006"/>
<dbReference type="GO" id="GO:0005576">
    <property type="term" value="C:extracellular region"/>
    <property type="evidence" value="ECO:0007669"/>
    <property type="project" value="UniProtKB-SubCell"/>
</dbReference>
<dbReference type="GO" id="GO:0052040">
    <property type="term" value="P:symbiont-mediated perturbation of host programmed cell death"/>
    <property type="evidence" value="ECO:0007669"/>
    <property type="project" value="UniProtKB-KW"/>
</dbReference>
<dbReference type="Gene3D" id="1.10.239.10">
    <property type="entry name" value="Elicitin domain"/>
    <property type="match status" value="1"/>
</dbReference>
<dbReference type="InterPro" id="IPR002200">
    <property type="entry name" value="Elicitin"/>
</dbReference>
<dbReference type="InterPro" id="IPR036470">
    <property type="entry name" value="Elicitin_sf"/>
</dbReference>
<dbReference type="Pfam" id="PF00964">
    <property type="entry name" value="Elicitin"/>
    <property type="match status" value="1"/>
</dbReference>
<dbReference type="PRINTS" id="PR00948">
    <property type="entry name" value="ELICITIN"/>
</dbReference>
<dbReference type="SMART" id="SM01187">
    <property type="entry name" value="Elicitin"/>
    <property type="match status" value="1"/>
</dbReference>
<dbReference type="SUPFAM" id="SSF48647">
    <property type="entry name" value="Fungal elicitin"/>
    <property type="match status" value="1"/>
</dbReference>
<sequence>TACTTTQQTAAYVALVSILSDDNFSQCSTDSGYSMLTATALPTTEQYTKMCASTACQAMIANIITLNPPDCELTVPTSGLVLNVYEYANGFNATCASL</sequence>
<reference key="1">
    <citation type="journal article" date="1995" name="Mol. Plant Microbe Interact.">
        <title>The relationships between the toxicity and the primary and secondary structures of elicitin-like protein elicitors secreted by the phytopathogenic fungus Pythium vexans.</title>
        <authorList>
            <person name="Huet J.-C."/>
            <person name="Le Caer J.-P."/>
            <person name="Nespoulous C."/>
            <person name="Pernollet J.-C."/>
        </authorList>
    </citation>
    <scope>PROTEIN SEQUENCE</scope>
    <scope>GLYCOSYLATION AT ASN-92</scope>
</reference>
<proteinExistence type="evidence at protein level"/>
<feature type="chain" id="PRO_0000260284" description="Elicitin Vex1">
    <location>
        <begin position="1"/>
        <end position="98"/>
    </location>
</feature>
<feature type="glycosylation site" description="N-linked (GlcNAc...) asparagine" evidence="2">
    <location>
        <position position="92"/>
    </location>
</feature>
<feature type="disulfide bond" evidence="1">
    <location>
        <begin position="3"/>
        <end position="71"/>
    </location>
</feature>
<feature type="disulfide bond" evidence="1">
    <location>
        <begin position="27"/>
        <end position="56"/>
    </location>
</feature>
<feature type="disulfide bond" evidence="1">
    <location>
        <begin position="51"/>
        <end position="95"/>
    </location>
</feature>
<keyword id="KW-0903">Direct protein sequencing</keyword>
<keyword id="KW-1015">Disulfide bond</keyword>
<keyword id="KW-0325">Glycoprotein</keyword>
<keyword id="KW-0928">Hypersensitive response elicitation</keyword>
<keyword id="KW-0964">Secreted</keyword>